<comment type="function">
    <text evidence="1">As a component of the decapping complex, involved in the degradation of mRNAs. Promotes P-body formation. Translational repressor (By similarity).</text>
</comment>
<comment type="subunit">
    <text evidence="1">Homodimer. Component of the decapping complex (By similarity).</text>
</comment>
<comment type="subcellular location">
    <subcellularLocation>
        <location evidence="1">Cytoplasm</location>
        <location evidence="1">P-body</location>
    </subcellularLocation>
</comment>
<comment type="similarity">
    <text evidence="5">Belongs to the LSM14 family.</text>
</comment>
<protein>
    <recommendedName>
        <fullName>Decapping 5-like protein</fullName>
    </recommendedName>
</protein>
<evidence type="ECO:0000250" key="1"/>
<evidence type="ECO:0000255" key="2">
    <source>
        <dbReference type="PROSITE-ProRule" id="PRU00845"/>
    </source>
</evidence>
<evidence type="ECO:0000255" key="3">
    <source>
        <dbReference type="PROSITE-ProRule" id="PRU01346"/>
    </source>
</evidence>
<evidence type="ECO:0000256" key="4">
    <source>
        <dbReference type="SAM" id="MobiDB-lite"/>
    </source>
</evidence>
<evidence type="ECO:0000305" key="5"/>
<feature type="chain" id="PRO_0000418340" description="Decapping 5-like protein">
    <location>
        <begin position="1"/>
        <end position="571"/>
    </location>
</feature>
<feature type="domain" description="Sm" evidence="3">
    <location>
        <begin position="25"/>
        <end position="108"/>
    </location>
</feature>
<feature type="domain" description="DFDF" evidence="2">
    <location>
        <begin position="419"/>
        <end position="455"/>
    </location>
</feature>
<feature type="region of interest" description="Disordered" evidence="4">
    <location>
        <begin position="1"/>
        <end position="27"/>
    </location>
</feature>
<feature type="region of interest" description="Disordered" evidence="4">
    <location>
        <begin position="102"/>
        <end position="141"/>
    </location>
</feature>
<feature type="region of interest" description="Disordered" evidence="4">
    <location>
        <begin position="159"/>
        <end position="187"/>
    </location>
</feature>
<feature type="region of interest" description="Disordered" evidence="4">
    <location>
        <begin position="258"/>
        <end position="305"/>
    </location>
</feature>
<feature type="short sequence motif" description="FFD box">
    <location>
        <begin position="474"/>
        <end position="489"/>
    </location>
</feature>
<feature type="short sequence motif" description="TFG box">
    <location>
        <begin position="498"/>
        <end position="518"/>
    </location>
</feature>
<feature type="compositionally biased region" description="Low complexity" evidence="4">
    <location>
        <begin position="1"/>
        <end position="17"/>
    </location>
</feature>
<feature type="compositionally biased region" description="Polar residues" evidence="4">
    <location>
        <begin position="104"/>
        <end position="138"/>
    </location>
</feature>
<feature type="compositionally biased region" description="Polar residues" evidence="4">
    <location>
        <begin position="167"/>
        <end position="187"/>
    </location>
</feature>
<feature type="compositionally biased region" description="Low complexity" evidence="4">
    <location>
        <begin position="264"/>
        <end position="279"/>
    </location>
</feature>
<feature type="compositionally biased region" description="Polar residues" evidence="4">
    <location>
        <begin position="293"/>
        <end position="305"/>
    </location>
</feature>
<gene>
    <name type="primary">DCP5-L</name>
    <name type="ordered locus">At5g45330</name>
    <name type="ORF">K9E15.11</name>
</gene>
<name>DCP5L_ARATH</name>
<dbReference type="EMBL" id="AB020744">
    <property type="protein sequence ID" value="BAB10254.1"/>
    <property type="molecule type" value="Genomic_DNA"/>
</dbReference>
<dbReference type="EMBL" id="CP002688">
    <property type="protein sequence ID" value="AED95233.1"/>
    <property type="molecule type" value="Genomic_DNA"/>
</dbReference>
<dbReference type="EMBL" id="AY735697">
    <property type="protein sequence ID" value="AAU44567.1"/>
    <property type="molecule type" value="mRNA"/>
</dbReference>
<dbReference type="EMBL" id="AY954874">
    <property type="protein sequence ID" value="AAX55200.1"/>
    <property type="molecule type" value="mRNA"/>
</dbReference>
<dbReference type="EMBL" id="BT022113">
    <property type="protein sequence ID" value="AAY34174.1"/>
    <property type="molecule type" value="mRNA"/>
</dbReference>
<dbReference type="RefSeq" id="NP_199346.1">
    <property type="nucleotide sequence ID" value="NM_123901.4"/>
</dbReference>
<dbReference type="SMR" id="Q9FH77"/>
<dbReference type="BioGRID" id="19818">
    <property type="interactions" value="1"/>
</dbReference>
<dbReference type="FunCoup" id="Q9FH77">
    <property type="interactions" value="3506"/>
</dbReference>
<dbReference type="STRING" id="3702.Q9FH77"/>
<dbReference type="GlyGen" id="Q9FH77">
    <property type="glycosylation" value="4 sites, 1 O-linked glycan (4 sites)"/>
</dbReference>
<dbReference type="iPTMnet" id="Q9FH77"/>
<dbReference type="PaxDb" id="3702-AT5G45330.1"/>
<dbReference type="ProteomicsDB" id="224219"/>
<dbReference type="EnsemblPlants" id="AT5G45330.1">
    <property type="protein sequence ID" value="AT5G45330.1"/>
    <property type="gene ID" value="AT5G45330"/>
</dbReference>
<dbReference type="GeneID" id="834569"/>
<dbReference type="Gramene" id="AT5G45330.1">
    <property type="protein sequence ID" value="AT5G45330.1"/>
    <property type="gene ID" value="AT5G45330"/>
</dbReference>
<dbReference type="KEGG" id="ath:AT5G45330"/>
<dbReference type="Araport" id="AT5G45330"/>
<dbReference type="TAIR" id="AT5G45330">
    <property type="gene designation" value="DCP5-L"/>
</dbReference>
<dbReference type="eggNOG" id="KOG1073">
    <property type="taxonomic scope" value="Eukaryota"/>
</dbReference>
<dbReference type="HOGENOM" id="CLU_028438_0_0_1"/>
<dbReference type="InParanoid" id="Q9FH77"/>
<dbReference type="PhylomeDB" id="Q9FH77"/>
<dbReference type="PRO" id="PR:Q9FH77"/>
<dbReference type="Proteomes" id="UP000006548">
    <property type="component" value="Chromosome 5"/>
</dbReference>
<dbReference type="ExpressionAtlas" id="Q9FH77">
    <property type="expression patterns" value="baseline and differential"/>
</dbReference>
<dbReference type="GO" id="GO:0000932">
    <property type="term" value="C:P-body"/>
    <property type="evidence" value="ECO:0000250"/>
    <property type="project" value="UniProtKB"/>
</dbReference>
<dbReference type="GO" id="GO:0042803">
    <property type="term" value="F:protein homodimerization activity"/>
    <property type="evidence" value="ECO:0000250"/>
    <property type="project" value="UniProtKB"/>
</dbReference>
<dbReference type="GO" id="GO:0003723">
    <property type="term" value="F:RNA binding"/>
    <property type="evidence" value="ECO:0007669"/>
    <property type="project" value="InterPro"/>
</dbReference>
<dbReference type="GO" id="GO:0031087">
    <property type="term" value="P:deadenylation-independent decapping of nuclear-transcribed mRNA"/>
    <property type="evidence" value="ECO:0000250"/>
    <property type="project" value="UniProtKB"/>
</dbReference>
<dbReference type="GO" id="GO:0006397">
    <property type="term" value="P:mRNA processing"/>
    <property type="evidence" value="ECO:0007669"/>
    <property type="project" value="UniProtKB-KW"/>
</dbReference>
<dbReference type="GO" id="GO:0017148">
    <property type="term" value="P:negative regulation of translation"/>
    <property type="evidence" value="ECO:0000250"/>
    <property type="project" value="UniProtKB"/>
</dbReference>
<dbReference type="GO" id="GO:0010606">
    <property type="term" value="P:positive regulation of cytoplasmic mRNA processing body assembly"/>
    <property type="evidence" value="ECO:0000250"/>
    <property type="project" value="UniProtKB"/>
</dbReference>
<dbReference type="CDD" id="cd01736">
    <property type="entry name" value="LSm14_N"/>
    <property type="match status" value="1"/>
</dbReference>
<dbReference type="FunFam" id="2.30.30.100:FF:000033">
    <property type="entry name" value="Trailer hitch, isoform C"/>
    <property type="match status" value="1"/>
</dbReference>
<dbReference type="Gene3D" id="2.30.30.100">
    <property type="match status" value="1"/>
</dbReference>
<dbReference type="InterPro" id="IPR025762">
    <property type="entry name" value="DFDF"/>
</dbReference>
<dbReference type="InterPro" id="IPR019050">
    <property type="entry name" value="FDF_dom"/>
</dbReference>
<dbReference type="InterPro" id="IPR025761">
    <property type="entry name" value="FFD_box"/>
</dbReference>
<dbReference type="InterPro" id="IPR025609">
    <property type="entry name" value="Lsm14-like_N"/>
</dbReference>
<dbReference type="InterPro" id="IPR010920">
    <property type="entry name" value="LSM_dom_sf"/>
</dbReference>
<dbReference type="InterPro" id="IPR047575">
    <property type="entry name" value="Sm"/>
</dbReference>
<dbReference type="InterPro" id="IPR025768">
    <property type="entry name" value="TFG_box"/>
</dbReference>
<dbReference type="PANTHER" id="PTHR13586:SF23">
    <property type="entry name" value="DECAPPING 5-LIKE PROTEIN-RELATED"/>
    <property type="match status" value="1"/>
</dbReference>
<dbReference type="PANTHER" id="PTHR13586">
    <property type="entry name" value="SCD6 PROTEIN-RELATED"/>
    <property type="match status" value="1"/>
</dbReference>
<dbReference type="Pfam" id="PF09532">
    <property type="entry name" value="FDF"/>
    <property type="match status" value="1"/>
</dbReference>
<dbReference type="Pfam" id="PF12701">
    <property type="entry name" value="LSM14"/>
    <property type="match status" value="1"/>
</dbReference>
<dbReference type="SMART" id="SM01199">
    <property type="entry name" value="FDF"/>
    <property type="match status" value="1"/>
</dbReference>
<dbReference type="SMART" id="SM01271">
    <property type="entry name" value="LSM14"/>
    <property type="match status" value="1"/>
</dbReference>
<dbReference type="SUPFAM" id="SSF50182">
    <property type="entry name" value="Sm-like ribonucleoproteins"/>
    <property type="match status" value="1"/>
</dbReference>
<dbReference type="PROSITE" id="PS51512">
    <property type="entry name" value="DFDF"/>
    <property type="match status" value="1"/>
</dbReference>
<dbReference type="PROSITE" id="PS51513">
    <property type="entry name" value="FFD"/>
    <property type="match status" value="1"/>
</dbReference>
<dbReference type="PROSITE" id="PS52002">
    <property type="entry name" value="SM"/>
    <property type="match status" value="1"/>
</dbReference>
<dbReference type="PROSITE" id="PS51536">
    <property type="entry name" value="TFG"/>
    <property type="match status" value="1"/>
</dbReference>
<sequence length="571" mass="61799">MASESSQSSSPSSSQPPSSVPSPSPGNNVGDTFIGSFISLISKYEIRYEGILYHLNVQDSTLGLKNVRSCGTEGRKKDGPQIPPCDKVYDYILFRGSDIKDLQVNPSPSAQSRQEIQSEQDVNQSPHSRPAMTMSSPISGYDSGYGLGRGSQWINTPALSSKPVPVTQHSSVPLSFQPPSANAGSLTESPVSLIDSTQSNAGSSMPIPSFVQGNKFASSGVPLGMMQKPVSSSSTIPNGPQIIDYFSSPIMGLVDDSSQVVTRSPDVSSNQSYSSNPSPLGQTQLHTPPGLASVSSNLSPPSEAQLSAPNIQKIYPSAPQAIGKVVYDPQSNHPHRSIPHELPAVASNSAPVIPGPLSKSPESFFDMDPSLQSRQQMVYRGQEMFAATNPASANVPSQSFAPRNHAPLLPLPVSAHQSRIPSSSIEYTEEFDFEAMNEKFKKSELWGYLGRNNQRNQNDYGEETAIEPNAEGKPAYNKDDFFDTISCNQLDRVARSGQQHNQFPEHMRQVPEAFGNNFQRPPPLQPGQGAYLAAQTNYRGGYHNNNNNNYYSNSGYGYYSGGRGRGRNTHF</sequence>
<proteinExistence type="evidence at transcript level"/>
<reference key="1">
    <citation type="journal article" date="2000" name="DNA Res.">
        <title>Structural analysis of Arabidopsis thaliana chromosome 5. X. Sequence features of the regions of 3,076,755 bp covered by sixty P1 and TAC clones.</title>
        <authorList>
            <person name="Sato S."/>
            <person name="Nakamura Y."/>
            <person name="Kaneko T."/>
            <person name="Katoh T."/>
            <person name="Asamizu E."/>
            <person name="Kotani H."/>
            <person name="Tabata S."/>
        </authorList>
    </citation>
    <scope>NUCLEOTIDE SEQUENCE [LARGE SCALE GENOMIC DNA]</scope>
    <source>
        <strain>cv. Columbia</strain>
    </source>
</reference>
<reference key="2">
    <citation type="journal article" date="2017" name="Plant J.">
        <title>Araport11: a complete reannotation of the Arabidopsis thaliana reference genome.</title>
        <authorList>
            <person name="Cheng C.Y."/>
            <person name="Krishnakumar V."/>
            <person name="Chan A.P."/>
            <person name="Thibaud-Nissen F."/>
            <person name="Schobel S."/>
            <person name="Town C.D."/>
        </authorList>
    </citation>
    <scope>GENOME REANNOTATION</scope>
    <source>
        <strain>cv. Columbia</strain>
    </source>
</reference>
<reference key="3">
    <citation type="journal article" date="2005" name="Plant Physiol.">
        <title>Analysis of the cDNAs of hypothetical genes on Arabidopsis chromosome 2 reveals numerous transcript variants.</title>
        <authorList>
            <person name="Xiao Y.-L."/>
            <person name="Smith S.R."/>
            <person name="Ishmael N."/>
            <person name="Redman J.C."/>
            <person name="Kumar N."/>
            <person name="Monaghan E.L."/>
            <person name="Ayele M."/>
            <person name="Haas B.J."/>
            <person name="Wu H.C."/>
            <person name="Town C.D."/>
        </authorList>
    </citation>
    <scope>NUCLEOTIDE SEQUENCE [LARGE SCALE MRNA]</scope>
    <source>
        <strain>cv. Columbia</strain>
    </source>
</reference>
<reference key="4">
    <citation type="journal article" date="2006" name="Plant Biotechnol. J.">
        <title>Simultaneous high-throughput recombinational cloning of open reading frames in closed and open configurations.</title>
        <authorList>
            <person name="Underwood B.A."/>
            <person name="Vanderhaeghen R."/>
            <person name="Whitford R."/>
            <person name="Town C.D."/>
            <person name="Hilson P."/>
        </authorList>
    </citation>
    <scope>NUCLEOTIDE SEQUENCE [LARGE SCALE MRNA]</scope>
    <source>
        <strain>cv. Columbia</strain>
    </source>
</reference>
<reference key="5">
    <citation type="submission" date="2005-05" db="EMBL/GenBank/DDBJ databases">
        <title>Arabidopsis cDNA clones.</title>
        <authorList>
            <person name="Shinn P."/>
            <person name="Chen H."/>
            <person name="Cheuk R.F."/>
            <person name="Kim C.J."/>
            <person name="Ecker J.R."/>
        </authorList>
    </citation>
    <scope>NUCLEOTIDE SEQUENCE [LARGE SCALE MRNA]</scope>
    <source>
        <strain>cv. Columbia</strain>
    </source>
</reference>
<reference key="6">
    <citation type="journal article" date="2009" name="Plant Cell">
        <title>Arabidopsis decapping 5 is required for mRNA decapping, P-body formation, and translational repression during postembryonic development.</title>
        <authorList>
            <person name="Xu J."/>
            <person name="Chua N.-H."/>
        </authorList>
    </citation>
    <scope>IDENTIFICATION</scope>
</reference>
<keyword id="KW-0963">Cytoplasm</keyword>
<keyword id="KW-0507">mRNA processing</keyword>
<keyword id="KW-1185">Reference proteome</keyword>
<keyword id="KW-0678">Repressor</keyword>
<keyword id="KW-0810">Translation regulation</keyword>
<organism>
    <name type="scientific">Arabidopsis thaliana</name>
    <name type="common">Mouse-ear cress</name>
    <dbReference type="NCBI Taxonomy" id="3702"/>
    <lineage>
        <taxon>Eukaryota</taxon>
        <taxon>Viridiplantae</taxon>
        <taxon>Streptophyta</taxon>
        <taxon>Embryophyta</taxon>
        <taxon>Tracheophyta</taxon>
        <taxon>Spermatophyta</taxon>
        <taxon>Magnoliopsida</taxon>
        <taxon>eudicotyledons</taxon>
        <taxon>Gunneridae</taxon>
        <taxon>Pentapetalae</taxon>
        <taxon>rosids</taxon>
        <taxon>malvids</taxon>
        <taxon>Brassicales</taxon>
        <taxon>Brassicaceae</taxon>
        <taxon>Camelineae</taxon>
        <taxon>Arabidopsis</taxon>
    </lineage>
</organism>
<accession>Q9FH77</accession>